<name>SERC_ECO8A</name>
<comment type="function">
    <text evidence="1">Catalyzes the reversible conversion of 3-phosphohydroxypyruvate to phosphoserine and of 3-hydroxy-2-oxo-4-phosphonooxybutanoate to phosphohydroxythreonine.</text>
</comment>
<comment type="catalytic activity">
    <reaction evidence="1">
        <text>O-phospho-L-serine + 2-oxoglutarate = 3-phosphooxypyruvate + L-glutamate</text>
        <dbReference type="Rhea" id="RHEA:14329"/>
        <dbReference type="ChEBI" id="CHEBI:16810"/>
        <dbReference type="ChEBI" id="CHEBI:18110"/>
        <dbReference type="ChEBI" id="CHEBI:29985"/>
        <dbReference type="ChEBI" id="CHEBI:57524"/>
        <dbReference type="EC" id="2.6.1.52"/>
    </reaction>
</comment>
<comment type="catalytic activity">
    <reaction evidence="1">
        <text>4-(phosphooxy)-L-threonine + 2-oxoglutarate = (R)-3-hydroxy-2-oxo-4-phosphooxybutanoate + L-glutamate</text>
        <dbReference type="Rhea" id="RHEA:16573"/>
        <dbReference type="ChEBI" id="CHEBI:16810"/>
        <dbReference type="ChEBI" id="CHEBI:29985"/>
        <dbReference type="ChEBI" id="CHEBI:58452"/>
        <dbReference type="ChEBI" id="CHEBI:58538"/>
        <dbReference type="EC" id="2.6.1.52"/>
    </reaction>
</comment>
<comment type="cofactor">
    <cofactor evidence="1">
        <name>pyridoxal 5'-phosphate</name>
        <dbReference type="ChEBI" id="CHEBI:597326"/>
    </cofactor>
    <text evidence="1">Binds 1 pyridoxal phosphate per subunit.</text>
</comment>
<comment type="pathway">
    <text evidence="1">Amino-acid biosynthesis; L-serine biosynthesis; L-serine from 3-phospho-D-glycerate: step 2/3.</text>
</comment>
<comment type="pathway">
    <text evidence="1">Cofactor biosynthesis; pyridoxine 5'-phosphate biosynthesis; pyridoxine 5'-phosphate from D-erythrose 4-phosphate: step 3/5.</text>
</comment>
<comment type="subunit">
    <text evidence="1">Homodimer.</text>
</comment>
<comment type="subcellular location">
    <subcellularLocation>
        <location evidence="1">Cytoplasm</location>
    </subcellularLocation>
</comment>
<comment type="similarity">
    <text evidence="1">Belongs to the class-V pyridoxal-phosphate-dependent aminotransferase family. SerC subfamily.</text>
</comment>
<proteinExistence type="inferred from homology"/>
<feature type="chain" id="PRO_1000203525" description="Phosphoserine aminotransferase">
    <location>
        <begin position="1"/>
        <end position="362"/>
    </location>
</feature>
<feature type="binding site" evidence="1">
    <location>
        <position position="9"/>
    </location>
    <ligand>
        <name>L-glutamate</name>
        <dbReference type="ChEBI" id="CHEBI:29985"/>
    </ligand>
</feature>
<feature type="binding site" evidence="1">
    <location>
        <position position="42"/>
    </location>
    <ligand>
        <name>L-glutamate</name>
        <dbReference type="ChEBI" id="CHEBI:29985"/>
    </ligand>
</feature>
<feature type="binding site" evidence="1">
    <location>
        <begin position="76"/>
        <end position="77"/>
    </location>
    <ligand>
        <name>pyridoxal 5'-phosphate</name>
        <dbReference type="ChEBI" id="CHEBI:597326"/>
    </ligand>
</feature>
<feature type="binding site" evidence="1">
    <location>
        <position position="102"/>
    </location>
    <ligand>
        <name>pyridoxal 5'-phosphate</name>
        <dbReference type="ChEBI" id="CHEBI:597326"/>
    </ligand>
</feature>
<feature type="binding site" evidence="1">
    <location>
        <position position="153"/>
    </location>
    <ligand>
        <name>pyridoxal 5'-phosphate</name>
        <dbReference type="ChEBI" id="CHEBI:597326"/>
    </ligand>
</feature>
<feature type="binding site" evidence="1">
    <location>
        <position position="174"/>
    </location>
    <ligand>
        <name>pyridoxal 5'-phosphate</name>
        <dbReference type="ChEBI" id="CHEBI:597326"/>
    </ligand>
</feature>
<feature type="binding site" evidence="1">
    <location>
        <position position="197"/>
    </location>
    <ligand>
        <name>pyridoxal 5'-phosphate</name>
        <dbReference type="ChEBI" id="CHEBI:597326"/>
    </ligand>
</feature>
<feature type="binding site" evidence="1">
    <location>
        <begin position="239"/>
        <end position="240"/>
    </location>
    <ligand>
        <name>pyridoxal 5'-phosphate</name>
        <dbReference type="ChEBI" id="CHEBI:597326"/>
    </ligand>
</feature>
<feature type="modified residue" description="N6-(pyridoxal phosphate)lysine" evidence="1">
    <location>
        <position position="198"/>
    </location>
</feature>
<accession>B7M835</accession>
<sequence length="362" mass="39840">MAQIFNFSSGPAMLPAEVLKQAQQELRDWNGLGTSVMEVSHRGKEFIQVAEEAEKDFRDLLNVPSNYKVLFCHGGGRGQFAAVPLNILGDKTTADYVDAGYWAASAIKEAKKYCTPNVFDAKVTVDGLRAVKPMREWQLSDNAAYMHYCPNETIDGIAIDETPDFGKDVVVAADFSSTILSRPIDVSRYGVIYAGAQKNIGPAGLTIVIVREDLLGKANIACPSILDYSILNDNGSMFNTPPTFAWYLSGLVFKWLKANGGVAEMDKINQQKAELLYGVIDNSDFYRNDVAKANRSRMNVPFQLADSALDKLFLEESFAAGLHALKGHRVVGGMRASIYNAMPLEGVKALTDFMVEFERRHG</sequence>
<dbReference type="EC" id="2.6.1.52" evidence="1"/>
<dbReference type="EMBL" id="CU928160">
    <property type="protein sequence ID" value="CAQ97811.1"/>
    <property type="molecule type" value="Genomic_DNA"/>
</dbReference>
<dbReference type="RefSeq" id="WP_000057149.1">
    <property type="nucleotide sequence ID" value="NC_011741.1"/>
</dbReference>
<dbReference type="SMR" id="B7M835"/>
<dbReference type="GeneID" id="93776511"/>
<dbReference type="KEGG" id="ecr:ECIAI1_0947"/>
<dbReference type="HOGENOM" id="CLU_034866_0_2_6"/>
<dbReference type="UniPathway" id="UPA00135">
    <property type="reaction ID" value="UER00197"/>
</dbReference>
<dbReference type="UniPathway" id="UPA00244">
    <property type="reaction ID" value="UER00311"/>
</dbReference>
<dbReference type="GO" id="GO:0005737">
    <property type="term" value="C:cytoplasm"/>
    <property type="evidence" value="ECO:0007669"/>
    <property type="project" value="UniProtKB-SubCell"/>
</dbReference>
<dbReference type="GO" id="GO:0004648">
    <property type="term" value="F:O-phospho-L-serine:2-oxoglutarate aminotransferase activity"/>
    <property type="evidence" value="ECO:0007669"/>
    <property type="project" value="UniProtKB-UniRule"/>
</dbReference>
<dbReference type="GO" id="GO:0030170">
    <property type="term" value="F:pyridoxal phosphate binding"/>
    <property type="evidence" value="ECO:0007669"/>
    <property type="project" value="UniProtKB-UniRule"/>
</dbReference>
<dbReference type="GO" id="GO:0006564">
    <property type="term" value="P:L-serine biosynthetic process"/>
    <property type="evidence" value="ECO:0007669"/>
    <property type="project" value="UniProtKB-UniRule"/>
</dbReference>
<dbReference type="GO" id="GO:0008615">
    <property type="term" value="P:pyridoxine biosynthetic process"/>
    <property type="evidence" value="ECO:0007669"/>
    <property type="project" value="UniProtKB-UniRule"/>
</dbReference>
<dbReference type="CDD" id="cd00611">
    <property type="entry name" value="PSAT_like"/>
    <property type="match status" value="1"/>
</dbReference>
<dbReference type="FunFam" id="3.40.640.10:FF:000010">
    <property type="entry name" value="Phosphoserine aminotransferase"/>
    <property type="match status" value="1"/>
</dbReference>
<dbReference type="FunFam" id="3.90.1150.10:FF:000006">
    <property type="entry name" value="Phosphoserine aminotransferase"/>
    <property type="match status" value="1"/>
</dbReference>
<dbReference type="Gene3D" id="3.90.1150.10">
    <property type="entry name" value="Aspartate Aminotransferase, domain 1"/>
    <property type="match status" value="1"/>
</dbReference>
<dbReference type="Gene3D" id="3.40.640.10">
    <property type="entry name" value="Type I PLP-dependent aspartate aminotransferase-like (Major domain)"/>
    <property type="match status" value="1"/>
</dbReference>
<dbReference type="HAMAP" id="MF_00160">
    <property type="entry name" value="SerC_aminotrans_5"/>
    <property type="match status" value="1"/>
</dbReference>
<dbReference type="InterPro" id="IPR000192">
    <property type="entry name" value="Aminotrans_V_dom"/>
</dbReference>
<dbReference type="InterPro" id="IPR020578">
    <property type="entry name" value="Aminotrans_V_PyrdxlP_BS"/>
</dbReference>
<dbReference type="InterPro" id="IPR022278">
    <property type="entry name" value="Pser_aminoTfrase"/>
</dbReference>
<dbReference type="InterPro" id="IPR015424">
    <property type="entry name" value="PyrdxlP-dep_Trfase"/>
</dbReference>
<dbReference type="InterPro" id="IPR015421">
    <property type="entry name" value="PyrdxlP-dep_Trfase_major"/>
</dbReference>
<dbReference type="InterPro" id="IPR015422">
    <property type="entry name" value="PyrdxlP-dep_Trfase_small"/>
</dbReference>
<dbReference type="NCBIfam" id="NF003764">
    <property type="entry name" value="PRK05355.1"/>
    <property type="match status" value="1"/>
</dbReference>
<dbReference type="NCBIfam" id="TIGR01364">
    <property type="entry name" value="serC_1"/>
    <property type="match status" value="1"/>
</dbReference>
<dbReference type="PANTHER" id="PTHR43247">
    <property type="entry name" value="PHOSPHOSERINE AMINOTRANSFERASE"/>
    <property type="match status" value="1"/>
</dbReference>
<dbReference type="PANTHER" id="PTHR43247:SF1">
    <property type="entry name" value="PHOSPHOSERINE AMINOTRANSFERASE"/>
    <property type="match status" value="1"/>
</dbReference>
<dbReference type="Pfam" id="PF00266">
    <property type="entry name" value="Aminotran_5"/>
    <property type="match status" value="1"/>
</dbReference>
<dbReference type="PIRSF" id="PIRSF000525">
    <property type="entry name" value="SerC"/>
    <property type="match status" value="1"/>
</dbReference>
<dbReference type="SUPFAM" id="SSF53383">
    <property type="entry name" value="PLP-dependent transferases"/>
    <property type="match status" value="1"/>
</dbReference>
<dbReference type="PROSITE" id="PS00595">
    <property type="entry name" value="AA_TRANSFER_CLASS_5"/>
    <property type="match status" value="1"/>
</dbReference>
<reference key="1">
    <citation type="journal article" date="2009" name="PLoS Genet.">
        <title>Organised genome dynamics in the Escherichia coli species results in highly diverse adaptive paths.</title>
        <authorList>
            <person name="Touchon M."/>
            <person name="Hoede C."/>
            <person name="Tenaillon O."/>
            <person name="Barbe V."/>
            <person name="Baeriswyl S."/>
            <person name="Bidet P."/>
            <person name="Bingen E."/>
            <person name="Bonacorsi S."/>
            <person name="Bouchier C."/>
            <person name="Bouvet O."/>
            <person name="Calteau A."/>
            <person name="Chiapello H."/>
            <person name="Clermont O."/>
            <person name="Cruveiller S."/>
            <person name="Danchin A."/>
            <person name="Diard M."/>
            <person name="Dossat C."/>
            <person name="Karoui M.E."/>
            <person name="Frapy E."/>
            <person name="Garry L."/>
            <person name="Ghigo J.M."/>
            <person name="Gilles A.M."/>
            <person name="Johnson J."/>
            <person name="Le Bouguenec C."/>
            <person name="Lescat M."/>
            <person name="Mangenot S."/>
            <person name="Martinez-Jehanne V."/>
            <person name="Matic I."/>
            <person name="Nassif X."/>
            <person name="Oztas S."/>
            <person name="Petit M.A."/>
            <person name="Pichon C."/>
            <person name="Rouy Z."/>
            <person name="Ruf C.S."/>
            <person name="Schneider D."/>
            <person name="Tourret J."/>
            <person name="Vacherie B."/>
            <person name="Vallenet D."/>
            <person name="Medigue C."/>
            <person name="Rocha E.P.C."/>
            <person name="Denamur E."/>
        </authorList>
    </citation>
    <scope>NUCLEOTIDE SEQUENCE [LARGE SCALE GENOMIC DNA]</scope>
    <source>
        <strain>IAI1</strain>
    </source>
</reference>
<organism>
    <name type="scientific">Escherichia coli O8 (strain IAI1)</name>
    <dbReference type="NCBI Taxonomy" id="585034"/>
    <lineage>
        <taxon>Bacteria</taxon>
        <taxon>Pseudomonadati</taxon>
        <taxon>Pseudomonadota</taxon>
        <taxon>Gammaproteobacteria</taxon>
        <taxon>Enterobacterales</taxon>
        <taxon>Enterobacteriaceae</taxon>
        <taxon>Escherichia</taxon>
    </lineage>
</organism>
<gene>
    <name evidence="1" type="primary">serC</name>
    <name type="ordered locus">ECIAI1_0947</name>
</gene>
<evidence type="ECO:0000255" key="1">
    <source>
        <dbReference type="HAMAP-Rule" id="MF_00160"/>
    </source>
</evidence>
<protein>
    <recommendedName>
        <fullName evidence="1">Phosphoserine aminotransferase</fullName>
        <ecNumber evidence="1">2.6.1.52</ecNumber>
    </recommendedName>
    <alternativeName>
        <fullName evidence="1">Phosphohydroxythreonine aminotransferase</fullName>
        <shortName evidence="1">PSAT</shortName>
    </alternativeName>
</protein>
<keyword id="KW-0028">Amino-acid biosynthesis</keyword>
<keyword id="KW-0032">Aminotransferase</keyword>
<keyword id="KW-0963">Cytoplasm</keyword>
<keyword id="KW-0663">Pyridoxal phosphate</keyword>
<keyword id="KW-0664">Pyridoxine biosynthesis</keyword>
<keyword id="KW-0718">Serine biosynthesis</keyword>
<keyword id="KW-0808">Transferase</keyword>